<evidence type="ECO:0000255" key="1">
    <source>
        <dbReference type="HAMAP-Rule" id="MF_01331"/>
    </source>
</evidence>
<evidence type="ECO:0000305" key="2"/>
<sequence>MSETRAVLRGVRLSVDKGRLVADLIRGKKVDQALNILTFTQKKAAVIVKKVLESAIANAEHNDGADIDELKVKTIYVEQGTTLKRFTARAKGRGNRISKPTCHVYVTVGN</sequence>
<organism>
    <name type="scientific">Paracidovorax citrulli (strain AAC00-1)</name>
    <name type="common">Acidovorax citrulli</name>
    <dbReference type="NCBI Taxonomy" id="397945"/>
    <lineage>
        <taxon>Bacteria</taxon>
        <taxon>Pseudomonadati</taxon>
        <taxon>Pseudomonadota</taxon>
        <taxon>Betaproteobacteria</taxon>
        <taxon>Burkholderiales</taxon>
        <taxon>Comamonadaceae</taxon>
        <taxon>Paracidovorax</taxon>
    </lineage>
</organism>
<protein>
    <recommendedName>
        <fullName evidence="1">Large ribosomal subunit protein uL22</fullName>
    </recommendedName>
    <alternativeName>
        <fullName evidence="2">50S ribosomal protein L22</fullName>
    </alternativeName>
</protein>
<reference key="1">
    <citation type="submission" date="2006-12" db="EMBL/GenBank/DDBJ databases">
        <title>Complete sequence of Acidovorax avenae subsp. citrulli AAC00-1.</title>
        <authorList>
            <person name="Copeland A."/>
            <person name="Lucas S."/>
            <person name="Lapidus A."/>
            <person name="Barry K."/>
            <person name="Detter J.C."/>
            <person name="Glavina del Rio T."/>
            <person name="Dalin E."/>
            <person name="Tice H."/>
            <person name="Pitluck S."/>
            <person name="Kiss H."/>
            <person name="Brettin T."/>
            <person name="Bruce D."/>
            <person name="Han C."/>
            <person name="Tapia R."/>
            <person name="Gilna P."/>
            <person name="Schmutz J."/>
            <person name="Larimer F."/>
            <person name="Land M."/>
            <person name="Hauser L."/>
            <person name="Kyrpides N."/>
            <person name="Kim E."/>
            <person name="Stahl D."/>
            <person name="Richardson P."/>
        </authorList>
    </citation>
    <scope>NUCLEOTIDE SEQUENCE [LARGE SCALE GENOMIC DNA]</scope>
    <source>
        <strain>AAC00-1</strain>
    </source>
</reference>
<accession>A1TJ12</accession>
<name>RL22_PARC0</name>
<gene>
    <name evidence="1" type="primary">rplV</name>
    <name type="ordered locus">Aave_0343</name>
</gene>
<feature type="chain" id="PRO_0000354441" description="Large ribosomal subunit protein uL22">
    <location>
        <begin position="1"/>
        <end position="110"/>
    </location>
</feature>
<dbReference type="EMBL" id="CP000512">
    <property type="protein sequence ID" value="ABM30950.1"/>
    <property type="molecule type" value="Genomic_DNA"/>
</dbReference>
<dbReference type="RefSeq" id="WP_011793527.1">
    <property type="nucleotide sequence ID" value="NC_008752.1"/>
</dbReference>
<dbReference type="SMR" id="A1TJ12"/>
<dbReference type="STRING" id="397945.Aave_0343"/>
<dbReference type="GeneID" id="79790148"/>
<dbReference type="KEGG" id="aav:Aave_0343"/>
<dbReference type="eggNOG" id="COG0091">
    <property type="taxonomic scope" value="Bacteria"/>
</dbReference>
<dbReference type="HOGENOM" id="CLU_083987_3_3_4"/>
<dbReference type="OrthoDB" id="9805969at2"/>
<dbReference type="Proteomes" id="UP000002596">
    <property type="component" value="Chromosome"/>
</dbReference>
<dbReference type="GO" id="GO:0022625">
    <property type="term" value="C:cytosolic large ribosomal subunit"/>
    <property type="evidence" value="ECO:0007669"/>
    <property type="project" value="TreeGrafter"/>
</dbReference>
<dbReference type="GO" id="GO:0019843">
    <property type="term" value="F:rRNA binding"/>
    <property type="evidence" value="ECO:0007669"/>
    <property type="project" value="UniProtKB-UniRule"/>
</dbReference>
<dbReference type="GO" id="GO:0003735">
    <property type="term" value="F:structural constituent of ribosome"/>
    <property type="evidence" value="ECO:0007669"/>
    <property type="project" value="InterPro"/>
</dbReference>
<dbReference type="GO" id="GO:0006412">
    <property type="term" value="P:translation"/>
    <property type="evidence" value="ECO:0007669"/>
    <property type="project" value="UniProtKB-UniRule"/>
</dbReference>
<dbReference type="CDD" id="cd00336">
    <property type="entry name" value="Ribosomal_L22"/>
    <property type="match status" value="1"/>
</dbReference>
<dbReference type="FunFam" id="3.90.470.10:FF:000001">
    <property type="entry name" value="50S ribosomal protein L22"/>
    <property type="match status" value="1"/>
</dbReference>
<dbReference type="Gene3D" id="3.90.470.10">
    <property type="entry name" value="Ribosomal protein L22/L17"/>
    <property type="match status" value="1"/>
</dbReference>
<dbReference type="HAMAP" id="MF_01331_B">
    <property type="entry name" value="Ribosomal_uL22_B"/>
    <property type="match status" value="1"/>
</dbReference>
<dbReference type="InterPro" id="IPR001063">
    <property type="entry name" value="Ribosomal_uL22"/>
</dbReference>
<dbReference type="InterPro" id="IPR005727">
    <property type="entry name" value="Ribosomal_uL22_bac/chlpt-type"/>
</dbReference>
<dbReference type="InterPro" id="IPR047867">
    <property type="entry name" value="Ribosomal_uL22_bac/org-type"/>
</dbReference>
<dbReference type="InterPro" id="IPR018260">
    <property type="entry name" value="Ribosomal_uL22_CS"/>
</dbReference>
<dbReference type="InterPro" id="IPR036394">
    <property type="entry name" value="Ribosomal_uL22_sf"/>
</dbReference>
<dbReference type="NCBIfam" id="TIGR01044">
    <property type="entry name" value="rplV_bact"/>
    <property type="match status" value="1"/>
</dbReference>
<dbReference type="PANTHER" id="PTHR13501">
    <property type="entry name" value="CHLOROPLAST 50S RIBOSOMAL PROTEIN L22-RELATED"/>
    <property type="match status" value="1"/>
</dbReference>
<dbReference type="PANTHER" id="PTHR13501:SF8">
    <property type="entry name" value="LARGE RIBOSOMAL SUBUNIT PROTEIN UL22M"/>
    <property type="match status" value="1"/>
</dbReference>
<dbReference type="Pfam" id="PF00237">
    <property type="entry name" value="Ribosomal_L22"/>
    <property type="match status" value="1"/>
</dbReference>
<dbReference type="SUPFAM" id="SSF54843">
    <property type="entry name" value="Ribosomal protein L22"/>
    <property type="match status" value="1"/>
</dbReference>
<dbReference type="PROSITE" id="PS00464">
    <property type="entry name" value="RIBOSOMAL_L22"/>
    <property type="match status" value="1"/>
</dbReference>
<proteinExistence type="inferred from homology"/>
<keyword id="KW-0687">Ribonucleoprotein</keyword>
<keyword id="KW-0689">Ribosomal protein</keyword>
<keyword id="KW-0694">RNA-binding</keyword>
<keyword id="KW-0699">rRNA-binding</keyword>
<comment type="function">
    <text evidence="1">This protein binds specifically to 23S rRNA; its binding is stimulated by other ribosomal proteins, e.g. L4, L17, and L20. It is important during the early stages of 50S assembly. It makes multiple contacts with different domains of the 23S rRNA in the assembled 50S subunit and ribosome (By similarity).</text>
</comment>
<comment type="function">
    <text evidence="1">The globular domain of the protein is located near the polypeptide exit tunnel on the outside of the subunit, while an extended beta-hairpin is found that lines the wall of the exit tunnel in the center of the 70S ribosome.</text>
</comment>
<comment type="subunit">
    <text evidence="1">Part of the 50S ribosomal subunit.</text>
</comment>
<comment type="similarity">
    <text evidence="1">Belongs to the universal ribosomal protein uL22 family.</text>
</comment>